<gene>
    <name evidence="1" type="primary">folE2</name>
    <name type="ordered locus">Pcar_2981</name>
</gene>
<proteinExistence type="inferred from homology"/>
<keyword id="KW-0378">Hydrolase</keyword>
<keyword id="KW-1185">Reference proteome</keyword>
<organism>
    <name type="scientific">Syntrophotalea carbinolica (strain DSM 2380 / NBRC 103641 / GraBd1)</name>
    <name type="common">Pelobacter carbinolicus</name>
    <dbReference type="NCBI Taxonomy" id="338963"/>
    <lineage>
        <taxon>Bacteria</taxon>
        <taxon>Pseudomonadati</taxon>
        <taxon>Thermodesulfobacteriota</taxon>
        <taxon>Desulfuromonadia</taxon>
        <taxon>Desulfuromonadales</taxon>
        <taxon>Syntrophotaleaceae</taxon>
        <taxon>Syntrophotalea</taxon>
    </lineage>
</organism>
<feature type="chain" id="PRO_0000289504" description="GTP cyclohydrolase FolE2">
    <location>
        <begin position="1"/>
        <end position="266"/>
    </location>
</feature>
<feature type="site" description="May be catalytically important" evidence="1">
    <location>
        <position position="144"/>
    </location>
</feature>
<evidence type="ECO:0000255" key="1">
    <source>
        <dbReference type="HAMAP-Rule" id="MF_01527"/>
    </source>
</evidence>
<evidence type="ECO:0000305" key="2"/>
<accession>Q3A091</accession>
<dbReference type="EC" id="3.5.4.16" evidence="1"/>
<dbReference type="EMBL" id="CP000142">
    <property type="protein sequence ID" value="ABA90216.1"/>
    <property type="status" value="ALT_INIT"/>
    <property type="molecule type" value="Genomic_DNA"/>
</dbReference>
<dbReference type="RefSeq" id="WP_011342768.1">
    <property type="nucleotide sequence ID" value="NC_007498.2"/>
</dbReference>
<dbReference type="SMR" id="Q3A091"/>
<dbReference type="STRING" id="338963.Pcar_2981"/>
<dbReference type="KEGG" id="pca:Pcar_2981"/>
<dbReference type="eggNOG" id="COG1469">
    <property type="taxonomic scope" value="Bacteria"/>
</dbReference>
<dbReference type="HOGENOM" id="CLU_062816_1_1_7"/>
<dbReference type="OrthoDB" id="9774824at2"/>
<dbReference type="UniPathway" id="UPA00848">
    <property type="reaction ID" value="UER00151"/>
</dbReference>
<dbReference type="Proteomes" id="UP000002534">
    <property type="component" value="Chromosome"/>
</dbReference>
<dbReference type="GO" id="GO:0003934">
    <property type="term" value="F:GTP cyclohydrolase I activity"/>
    <property type="evidence" value="ECO:0007669"/>
    <property type="project" value="UniProtKB-UniRule"/>
</dbReference>
<dbReference type="GO" id="GO:0046654">
    <property type="term" value="P:tetrahydrofolate biosynthetic process"/>
    <property type="evidence" value="ECO:0007669"/>
    <property type="project" value="UniProtKB-UniRule"/>
</dbReference>
<dbReference type="Gene3D" id="3.10.270.10">
    <property type="entry name" value="Urate Oxidase"/>
    <property type="match status" value="1"/>
</dbReference>
<dbReference type="HAMAP" id="MF_01527_B">
    <property type="entry name" value="GTP_cyclohydrol_B"/>
    <property type="match status" value="1"/>
</dbReference>
<dbReference type="InterPro" id="IPR022838">
    <property type="entry name" value="GTP_cyclohydrolase_FolE2"/>
</dbReference>
<dbReference type="InterPro" id="IPR003801">
    <property type="entry name" value="GTP_cyclohydrolase_FolE2/MptA"/>
</dbReference>
<dbReference type="NCBIfam" id="NF010200">
    <property type="entry name" value="PRK13674.1-1"/>
    <property type="match status" value="1"/>
</dbReference>
<dbReference type="PANTHER" id="PTHR36445">
    <property type="entry name" value="GTP CYCLOHYDROLASE MPTA"/>
    <property type="match status" value="1"/>
</dbReference>
<dbReference type="PANTHER" id="PTHR36445:SF1">
    <property type="entry name" value="GTP CYCLOHYDROLASE MPTA"/>
    <property type="match status" value="1"/>
</dbReference>
<dbReference type="Pfam" id="PF02649">
    <property type="entry name" value="GCHY-1"/>
    <property type="match status" value="1"/>
</dbReference>
<reference key="1">
    <citation type="submission" date="2005-10" db="EMBL/GenBank/DDBJ databases">
        <title>Complete sequence of Pelobacter carbinolicus DSM 2380.</title>
        <authorList>
            <person name="Copeland A."/>
            <person name="Lucas S."/>
            <person name="Lapidus A."/>
            <person name="Barry K."/>
            <person name="Detter J.C."/>
            <person name="Glavina T."/>
            <person name="Hammon N."/>
            <person name="Israni S."/>
            <person name="Pitluck S."/>
            <person name="Chertkov O."/>
            <person name="Schmutz J."/>
            <person name="Larimer F."/>
            <person name="Land M."/>
            <person name="Kyrpides N."/>
            <person name="Ivanova N."/>
            <person name="Richardson P."/>
        </authorList>
    </citation>
    <scope>NUCLEOTIDE SEQUENCE [LARGE SCALE GENOMIC DNA]</scope>
    <source>
        <strain>DSM 2380 / NBRC 103641 / GraBd1</strain>
    </source>
</reference>
<name>GCH4_SYNC1</name>
<comment type="function">
    <text evidence="1">Converts GTP to 7,8-dihydroneopterin triphosphate.</text>
</comment>
<comment type="catalytic activity">
    <reaction evidence="1">
        <text>GTP + H2O = 7,8-dihydroneopterin 3'-triphosphate + formate + H(+)</text>
        <dbReference type="Rhea" id="RHEA:17473"/>
        <dbReference type="ChEBI" id="CHEBI:15377"/>
        <dbReference type="ChEBI" id="CHEBI:15378"/>
        <dbReference type="ChEBI" id="CHEBI:15740"/>
        <dbReference type="ChEBI" id="CHEBI:37565"/>
        <dbReference type="ChEBI" id="CHEBI:58462"/>
        <dbReference type="EC" id="3.5.4.16"/>
    </reaction>
</comment>
<comment type="pathway">
    <text evidence="1">Cofactor biosynthesis; 7,8-dihydroneopterin triphosphate biosynthesis; 7,8-dihydroneopterin triphosphate from GTP: step 1/1.</text>
</comment>
<comment type="similarity">
    <text evidence="1">Belongs to the GTP cyclohydrolase IV family.</text>
</comment>
<comment type="sequence caution" evidence="2">
    <conflict type="erroneous initiation">
        <sequence resource="EMBL-CDS" id="ABA90216"/>
    </conflict>
</comment>
<sequence length="266" mass="30926">MRDMQMERDTRNIAIDKVGVKDIRYPIVVMDKNKDQQHTVARINMYVDLPHHFKGTHMSRFVEILNQYRGEITMRNMGELLQEMKNRLDASCAHLKMDFPYFIEKQAPVSKARSLMEYRCRLRGTLDKQKDFVLGVEVPLTALCPCSREISERGAHNQRSAVKVEVRMSKFIWIEDLISWIEECGSAPVYALLKREDEKAVTEQAYDNPMFVEDIVRAVTLKLKSAPEITWFRVECENFESIHNHSAYAMVEFPPRTEDAEPAPAP</sequence>
<protein>
    <recommendedName>
        <fullName evidence="1">GTP cyclohydrolase FolE2</fullName>
        <ecNumber evidence="1">3.5.4.16</ecNumber>
    </recommendedName>
</protein>